<proteinExistence type="inferred from homology"/>
<evidence type="ECO:0000250" key="1"/>
<evidence type="ECO:0000305" key="2"/>
<reference key="1">
    <citation type="journal article" date="2009" name="PLoS Genet.">
        <title>The genome of Nectria haematococca: contribution of supernumerary chromosomes to gene expansion.</title>
        <authorList>
            <person name="Coleman J.J."/>
            <person name="Rounsley S.D."/>
            <person name="Rodriguez-Carres M."/>
            <person name="Kuo A."/>
            <person name="Wasmann C.C."/>
            <person name="Grimwood J."/>
            <person name="Schmutz J."/>
            <person name="Taga M."/>
            <person name="White G.J."/>
            <person name="Zhou S."/>
            <person name="Schwartz D.C."/>
            <person name="Freitag M."/>
            <person name="Ma L.-J."/>
            <person name="Danchin E.G.J."/>
            <person name="Henrissat B."/>
            <person name="Coutinho P.M."/>
            <person name="Nelson D.R."/>
            <person name="Straney D."/>
            <person name="Napoli C.A."/>
            <person name="Barker B.M."/>
            <person name="Gribskov M."/>
            <person name="Rep M."/>
            <person name="Kroken S."/>
            <person name="Molnar I."/>
            <person name="Rensing C."/>
            <person name="Kennell J.C."/>
            <person name="Zamora J."/>
            <person name="Farman M.L."/>
            <person name="Selker E.U."/>
            <person name="Salamov A."/>
            <person name="Shapiro H."/>
            <person name="Pangilinan J."/>
            <person name="Lindquist E."/>
            <person name="Lamers C."/>
            <person name="Grigoriev I.V."/>
            <person name="Geiser D.M."/>
            <person name="Covert S.F."/>
            <person name="Temporini E."/>
            <person name="VanEtten H.D."/>
        </authorList>
    </citation>
    <scope>NUCLEOTIDE SEQUENCE [LARGE SCALE GENOMIC DNA]</scope>
    <source>
        <strain>ATCC MYA-4622 / CBS 123669 / FGSC 9596 / NRRL 45880 / 77-13-4</strain>
    </source>
</reference>
<organism>
    <name type="scientific">Fusarium vanettenii (strain ATCC MYA-4622 / CBS 123669 / FGSC 9596 / NRRL 45880 / 77-13-4)</name>
    <name type="common">Fusarium solani subsp. pisi</name>
    <dbReference type="NCBI Taxonomy" id="660122"/>
    <lineage>
        <taxon>Eukaryota</taxon>
        <taxon>Fungi</taxon>
        <taxon>Dikarya</taxon>
        <taxon>Ascomycota</taxon>
        <taxon>Pezizomycotina</taxon>
        <taxon>Sordariomycetes</taxon>
        <taxon>Hypocreomycetidae</taxon>
        <taxon>Hypocreales</taxon>
        <taxon>Nectriaceae</taxon>
        <taxon>Fusarium</taxon>
        <taxon>Fusarium solani species complex</taxon>
        <taxon>Fusarium vanettenii</taxon>
    </lineage>
</organism>
<gene>
    <name type="ORF">NECHADRAFT_60613</name>
</gene>
<accession>C7Z837</accession>
<name>AMPP2_FUSV7</name>
<sequence length="462" mass="51879">MVAEDFEAVLKAKYPSKSHAKRVVDLIREKIPNANGILYLESRMTKLLEDNDEPEPFRQRRFFYYLTGCNLPDCYYIYDIQSSKSILFIPPIDPDSVIWSGLPLSIDEALQKYDVDDVKLTSELNATLAHLGQANPQSTAYAIANQVSDHVTFLEFEKKNFDALKEAIEVSRVVKDEFEVAMIRKANHVSDIAHRAVLEKAKTAVNEREFEAAFLERCVAHGAKEMAYHPIAASGRAAATLHYVTNESPLEGKLNLLMDAGAEWNNYAADITRTFPLSGKFSKESREIYEIVLKMQNDCIAVLKEGVLWDDVHLLAHKIAIDGLLSIGILKGDKDEILKGRTSAAFLPHGLGHYLGMDTHDTGGNANYEDKDKLFRYLRVRGNLPSGSVITVEPGIYFCNFIIAPYLEDPVHSKFIDSAVLDKYWDVGGVRIEDNILITKDGYENLTITPKEVDEIETLVSN</sequence>
<comment type="function">
    <text evidence="1">Catalyzes the removal of a penultimate prolyl residue from the N-termini of peptides.</text>
</comment>
<comment type="catalytic activity">
    <reaction>
        <text>Release of any N-terminal amino acid, including proline, that is linked to proline, even from a dipeptide or tripeptide.</text>
        <dbReference type="EC" id="3.4.11.9"/>
    </reaction>
</comment>
<comment type="cofactor">
    <cofactor evidence="1">
        <name>Mn(2+)</name>
        <dbReference type="ChEBI" id="CHEBI:29035"/>
    </cofactor>
    <text evidence="1">Binds 2 manganese ions per subunit.</text>
</comment>
<comment type="similarity">
    <text evidence="2">Belongs to the peptidase M24B family.</text>
</comment>
<feature type="chain" id="PRO_0000411839" description="Probable Xaa-Pro aminopeptidase NECHADRAFT_60613">
    <location>
        <begin position="1"/>
        <end position="462"/>
    </location>
</feature>
<feature type="binding site" evidence="1">
    <location>
        <position position="259"/>
    </location>
    <ligand>
        <name>Mn(2+)</name>
        <dbReference type="ChEBI" id="CHEBI:29035"/>
        <label>2</label>
    </ligand>
</feature>
<feature type="binding site" evidence="1">
    <location>
        <position position="270"/>
    </location>
    <ligand>
        <name>Mn(2+)</name>
        <dbReference type="ChEBI" id="CHEBI:29035"/>
        <label>1</label>
    </ligand>
</feature>
<feature type="binding site" evidence="1">
    <location>
        <position position="270"/>
    </location>
    <ligand>
        <name>Mn(2+)</name>
        <dbReference type="ChEBI" id="CHEBI:29035"/>
        <label>2</label>
    </ligand>
</feature>
<feature type="binding site" evidence="1">
    <location>
        <position position="393"/>
    </location>
    <ligand>
        <name>Mn(2+)</name>
        <dbReference type="ChEBI" id="CHEBI:29035"/>
        <label>1</label>
    </ligand>
</feature>
<feature type="binding site" evidence="1">
    <location>
        <position position="433"/>
    </location>
    <ligand>
        <name>Mn(2+)</name>
        <dbReference type="ChEBI" id="CHEBI:29035"/>
        <label>1</label>
    </ligand>
</feature>
<feature type="binding site" evidence="1">
    <location>
        <position position="433"/>
    </location>
    <ligand>
        <name>Mn(2+)</name>
        <dbReference type="ChEBI" id="CHEBI:29035"/>
        <label>2</label>
    </ligand>
</feature>
<dbReference type="EC" id="3.4.11.9"/>
<dbReference type="EMBL" id="GG698911">
    <property type="protein sequence ID" value="EEU39803.1"/>
    <property type="molecule type" value="Genomic_DNA"/>
</dbReference>
<dbReference type="RefSeq" id="XP_003045516.1">
    <property type="nucleotide sequence ID" value="XM_003045470.1"/>
</dbReference>
<dbReference type="SMR" id="C7Z837"/>
<dbReference type="FunCoup" id="C7Z837">
    <property type="interactions" value="422"/>
</dbReference>
<dbReference type="STRING" id="660122.C7Z837"/>
<dbReference type="EnsemblFungi" id="NechaT60613">
    <property type="protein sequence ID" value="NechaP60613"/>
    <property type="gene ID" value="NechaG60613"/>
</dbReference>
<dbReference type="GeneID" id="9672417"/>
<dbReference type="KEGG" id="nhe:NECHADRAFT_60613"/>
<dbReference type="VEuPathDB" id="FungiDB:NECHADRAFT_60613"/>
<dbReference type="eggNOG" id="KOG2737">
    <property type="taxonomic scope" value="Eukaryota"/>
</dbReference>
<dbReference type="HOGENOM" id="CLU_017266_1_2_1"/>
<dbReference type="InParanoid" id="C7Z837"/>
<dbReference type="OMA" id="DAHALFF"/>
<dbReference type="OrthoDB" id="10261878at2759"/>
<dbReference type="Proteomes" id="UP000005206">
    <property type="component" value="Unassembled WGS sequence"/>
</dbReference>
<dbReference type="GO" id="GO:0030145">
    <property type="term" value="F:manganese ion binding"/>
    <property type="evidence" value="ECO:0007669"/>
    <property type="project" value="InterPro"/>
</dbReference>
<dbReference type="GO" id="GO:0070006">
    <property type="term" value="F:metalloaminopeptidase activity"/>
    <property type="evidence" value="ECO:0007669"/>
    <property type="project" value="InterPro"/>
</dbReference>
<dbReference type="GO" id="GO:0006508">
    <property type="term" value="P:proteolysis"/>
    <property type="evidence" value="ECO:0007669"/>
    <property type="project" value="UniProtKB-KW"/>
</dbReference>
<dbReference type="CDD" id="cd01087">
    <property type="entry name" value="Prolidase"/>
    <property type="match status" value="1"/>
</dbReference>
<dbReference type="FunFam" id="3.90.230.10:FF:000002">
    <property type="entry name" value="Xaa-Pro aminopeptidase 3"/>
    <property type="match status" value="1"/>
</dbReference>
<dbReference type="Gene3D" id="3.90.230.10">
    <property type="entry name" value="Creatinase/methionine aminopeptidase superfamily"/>
    <property type="match status" value="1"/>
</dbReference>
<dbReference type="Gene3D" id="3.40.350.10">
    <property type="entry name" value="Creatinase/prolidase N-terminal domain"/>
    <property type="match status" value="1"/>
</dbReference>
<dbReference type="InterPro" id="IPR007865">
    <property type="entry name" value="Aminopep_P_N"/>
</dbReference>
<dbReference type="InterPro" id="IPR029149">
    <property type="entry name" value="Creatin/AminoP/Spt16_N"/>
</dbReference>
<dbReference type="InterPro" id="IPR036005">
    <property type="entry name" value="Creatinase/aminopeptidase-like"/>
</dbReference>
<dbReference type="InterPro" id="IPR000994">
    <property type="entry name" value="Pept_M24"/>
</dbReference>
<dbReference type="InterPro" id="IPR052433">
    <property type="entry name" value="X-Pro_dipept-like"/>
</dbReference>
<dbReference type="PANTHER" id="PTHR43226">
    <property type="entry name" value="XAA-PRO AMINOPEPTIDASE 3"/>
    <property type="match status" value="1"/>
</dbReference>
<dbReference type="PANTHER" id="PTHR43226:SF1">
    <property type="entry name" value="XAA-PRO DIPEPTIDASE"/>
    <property type="match status" value="1"/>
</dbReference>
<dbReference type="Pfam" id="PF05195">
    <property type="entry name" value="AMP_N"/>
    <property type="match status" value="1"/>
</dbReference>
<dbReference type="Pfam" id="PF00557">
    <property type="entry name" value="Peptidase_M24"/>
    <property type="match status" value="1"/>
</dbReference>
<dbReference type="SMART" id="SM01011">
    <property type="entry name" value="AMP_N"/>
    <property type="match status" value="1"/>
</dbReference>
<dbReference type="SUPFAM" id="SSF55920">
    <property type="entry name" value="Creatinase/aminopeptidase"/>
    <property type="match status" value="1"/>
</dbReference>
<dbReference type="SUPFAM" id="SSF53092">
    <property type="entry name" value="Creatinase/prolidase N-terminal domain"/>
    <property type="match status" value="1"/>
</dbReference>
<protein>
    <recommendedName>
        <fullName>Probable Xaa-Pro aminopeptidase NECHADRAFT_60613</fullName>
        <ecNumber>3.4.11.9</ecNumber>
    </recommendedName>
    <alternativeName>
        <fullName>Aminoacylproline aminopeptidase</fullName>
    </alternativeName>
    <alternativeName>
        <fullName>Prolidase</fullName>
    </alternativeName>
</protein>
<keyword id="KW-0031">Aminopeptidase</keyword>
<keyword id="KW-0378">Hydrolase</keyword>
<keyword id="KW-0464">Manganese</keyword>
<keyword id="KW-0479">Metal-binding</keyword>
<keyword id="KW-0482">Metalloprotease</keyword>
<keyword id="KW-0645">Protease</keyword>
<keyword id="KW-1185">Reference proteome</keyword>